<evidence type="ECO:0000250" key="1"/>
<evidence type="ECO:0000255" key="2">
    <source>
        <dbReference type="PROSITE-ProRule" id="PRU10135"/>
    </source>
</evidence>
<evidence type="ECO:0000256" key="3">
    <source>
        <dbReference type="SAM" id="MobiDB-lite"/>
    </source>
</evidence>
<evidence type="ECO:0000305" key="4"/>
<proteinExistence type="inferred from homology"/>
<sequence length="1192" mass="137514">MQSSMWSFLQKKEGGEIEDIEKKISNAQELNKLKTSPKKKREAVVKEKVEKKEKKETKPKRKSSKKNKEEEEEEEQEEQDGEEEQEEEEEYQQQDEEIEEDINGEEEMELDENEKEKNKKKKQSLKTKENKESKSSSSSKKTIENKETKKPEKQSSKQSNNLKRLKRKKMDDDEEDEEDENKTDDNDLDDMLDDDSDNEKDSISSKDKEYKEKVLKDKEKKEKEKKEKELKEKESKEKEKKEKEKKEKEEKDKKEKELKEKELKEKELKDKKEKELKEKEKELKDKEKKEKELKEKEKKEKEEKEKEKKEKKEKELKEKEEKEKKEKELKEKELKEKELKEKELKEKELTSPKKETIDISDLFKRANAEAKSSVPTSTSKNSKTNKKQKVDHKPTATTKKPSPVLEAKQSTTTTTTTTTTSTATTISSKSISSPSKKEEKEVITSKKQVEATKVEVKKEKEKEKEKEKEDDEEEEEEEEDDDEKLEDIDEEEYEEEEEEDEEGISENEEEEEKKSTQIKSKFIKKVPISKKKGNAKTIQADLKVIGKYRPIEDAQWKKGEAVPYMVLAKTFEMMESTSSRLIIIEHLANLFRSIMLLSPKDLVMTIYLSINKIGPSYQSKELGIGEHVLIKSLAESTGRSVDVIKQELTEVGDLGIIAQNSRSTQTLMGKPTPLTIQSVFKTFQQIADLSGTGGQQKKKDLIKKLLVSCKDCETLYIIRSLQGKLRIGLAERSVLMALAKSVLVTPPIDGSGQQIFDIRKQMKQEEFEERYQNVVSKVTRAYSQLPNYDLFVPHLIAVNGIDNILSTCSLKVGIPVKPMLAQPTTGISQMLDRFSDMEFTCEFKYDGERAQIHRLPDGTTHIYTRNLEDYTQKYPDIVANVTKFVGPNVKSFILDCEAVAFDAATKKILSFQVLSTRARKSVQLSQIKVPVCVFAFDLLYLNGQSLIDEPLIKRREHLVENFIASDGVFAFAKYSNISDVNDIQSYLEEAVEGNCEGLMVKTLKEKSIYEPSRRSYNWLKIKKDYMQGMTDSLDLVPIGAWYGKGKRTGTYGAYLLACYDENNEEFQTLCKIGTGFSDEQLTTFTSQLKPHLINQPRNQFRFSDSIKPDVWFSPSCVWEVLAADLSISPVHTAASGILDPNKGIALRFPRFIRIRPDKSPEDATSSDQVVDMYQNQKINSQSSKINEKDEDY</sequence>
<dbReference type="EC" id="6.5.1.1" evidence="2"/>
<dbReference type="EMBL" id="AAFI02000012">
    <property type="protein sequence ID" value="EAL70139.1"/>
    <property type="molecule type" value="Genomic_DNA"/>
</dbReference>
<dbReference type="RefSeq" id="XP_644124.1">
    <property type="nucleotide sequence ID" value="XM_639032.1"/>
</dbReference>
<dbReference type="SMR" id="Q869E1"/>
<dbReference type="FunCoup" id="Q869E1">
    <property type="interactions" value="879"/>
</dbReference>
<dbReference type="STRING" id="44689.Q869E1"/>
<dbReference type="REBASE" id="165447">
    <property type="entry name" value="Fba101ORF1712P"/>
</dbReference>
<dbReference type="PaxDb" id="44689-DDB0232265"/>
<dbReference type="EnsemblProtists" id="EAL70139">
    <property type="protein sequence ID" value="EAL70139"/>
    <property type="gene ID" value="DDB_G0274493"/>
</dbReference>
<dbReference type="GeneID" id="8619554"/>
<dbReference type="KEGG" id="ddi:DDB_G0274493"/>
<dbReference type="dictyBase" id="DDB_G0274493">
    <property type="gene designation" value="lig1"/>
</dbReference>
<dbReference type="VEuPathDB" id="AmoebaDB:DDB_G0274493"/>
<dbReference type="eggNOG" id="KOG0967">
    <property type="taxonomic scope" value="Eukaryota"/>
</dbReference>
<dbReference type="HOGENOM" id="CLU_005138_0_1_1"/>
<dbReference type="InParanoid" id="Q869E1"/>
<dbReference type="OMA" id="NDFTCEY"/>
<dbReference type="PhylomeDB" id="Q869E1"/>
<dbReference type="Reactome" id="R-DDI-110362">
    <property type="pathway name" value="POLB-Dependent Long Patch Base Excision Repair"/>
</dbReference>
<dbReference type="Reactome" id="R-DDI-5358565">
    <property type="pathway name" value="Mismatch repair (MMR) directed by MSH2:MSH6 (MutSalpha)"/>
</dbReference>
<dbReference type="Reactome" id="R-DDI-5358606">
    <property type="pathway name" value="Mismatch repair (MMR) directed by MSH2:MSH3 (MutSbeta)"/>
</dbReference>
<dbReference type="Reactome" id="R-DDI-5651801">
    <property type="pathway name" value="PCNA-Dependent Long Patch Base Excision Repair"/>
</dbReference>
<dbReference type="Reactome" id="R-DDI-6782210">
    <property type="pathway name" value="Gap-filling DNA repair synthesis and ligation in TC-NER"/>
</dbReference>
<dbReference type="Reactome" id="R-DDI-69183">
    <property type="pathway name" value="Processive synthesis on the lagging strand"/>
</dbReference>
<dbReference type="PRO" id="PR:Q869E1"/>
<dbReference type="Proteomes" id="UP000002195">
    <property type="component" value="Chromosome 2"/>
</dbReference>
<dbReference type="GO" id="GO:0005634">
    <property type="term" value="C:nucleus"/>
    <property type="evidence" value="ECO:0000318"/>
    <property type="project" value="GO_Central"/>
</dbReference>
<dbReference type="GO" id="GO:0005524">
    <property type="term" value="F:ATP binding"/>
    <property type="evidence" value="ECO:0007669"/>
    <property type="project" value="UniProtKB-KW"/>
</dbReference>
<dbReference type="GO" id="GO:0003677">
    <property type="term" value="F:DNA binding"/>
    <property type="evidence" value="ECO:0007669"/>
    <property type="project" value="InterPro"/>
</dbReference>
<dbReference type="GO" id="GO:0003910">
    <property type="term" value="F:DNA ligase (ATP) activity"/>
    <property type="evidence" value="ECO:0000318"/>
    <property type="project" value="GO_Central"/>
</dbReference>
<dbReference type="GO" id="GO:0046872">
    <property type="term" value="F:metal ion binding"/>
    <property type="evidence" value="ECO:0007669"/>
    <property type="project" value="UniProtKB-KW"/>
</dbReference>
<dbReference type="GO" id="GO:0051301">
    <property type="term" value="P:cell division"/>
    <property type="evidence" value="ECO:0007669"/>
    <property type="project" value="UniProtKB-KW"/>
</dbReference>
<dbReference type="GO" id="GO:0071897">
    <property type="term" value="P:DNA biosynthetic process"/>
    <property type="evidence" value="ECO:0007669"/>
    <property type="project" value="InterPro"/>
</dbReference>
<dbReference type="GO" id="GO:0006310">
    <property type="term" value="P:DNA recombination"/>
    <property type="evidence" value="ECO:0007669"/>
    <property type="project" value="UniProtKB-KW"/>
</dbReference>
<dbReference type="GO" id="GO:0006281">
    <property type="term" value="P:DNA repair"/>
    <property type="evidence" value="ECO:0007669"/>
    <property type="project" value="UniProtKB-KW"/>
</dbReference>
<dbReference type="GO" id="GO:0006273">
    <property type="term" value="P:lagging strand elongation"/>
    <property type="evidence" value="ECO:0000318"/>
    <property type="project" value="GO_Central"/>
</dbReference>
<dbReference type="GO" id="GO:1903461">
    <property type="term" value="P:Okazaki fragment processing involved in mitotic DNA replication"/>
    <property type="evidence" value="ECO:0000318"/>
    <property type="project" value="GO_Central"/>
</dbReference>
<dbReference type="CDD" id="cd07900">
    <property type="entry name" value="Adenylation_DNA_ligase_I_Euk"/>
    <property type="match status" value="1"/>
</dbReference>
<dbReference type="CDD" id="cd07969">
    <property type="entry name" value="OBF_DNA_ligase_I"/>
    <property type="match status" value="1"/>
</dbReference>
<dbReference type="FunFam" id="1.10.3260.10:FF:000001">
    <property type="entry name" value="DNA ligase"/>
    <property type="match status" value="1"/>
</dbReference>
<dbReference type="FunFam" id="2.40.50.140:FF:000062">
    <property type="entry name" value="DNA ligase"/>
    <property type="match status" value="1"/>
</dbReference>
<dbReference type="FunFam" id="3.30.470.30:FF:000016">
    <property type="entry name" value="DNA ligase"/>
    <property type="match status" value="1"/>
</dbReference>
<dbReference type="Gene3D" id="3.30.1490.70">
    <property type="match status" value="1"/>
</dbReference>
<dbReference type="Gene3D" id="1.10.3260.10">
    <property type="entry name" value="DNA ligase, ATP-dependent, N-terminal domain"/>
    <property type="match status" value="1"/>
</dbReference>
<dbReference type="Gene3D" id="3.30.470.30">
    <property type="entry name" value="DNA ligase/mRNA capping enzyme"/>
    <property type="match status" value="1"/>
</dbReference>
<dbReference type="Gene3D" id="2.40.50.140">
    <property type="entry name" value="Nucleic acid-binding proteins"/>
    <property type="match status" value="1"/>
</dbReference>
<dbReference type="InterPro" id="IPR050191">
    <property type="entry name" value="ATP-dep_DNA_ligase"/>
</dbReference>
<dbReference type="InterPro" id="IPR000977">
    <property type="entry name" value="DNA_ligase_ATP-dep"/>
</dbReference>
<dbReference type="InterPro" id="IPR012309">
    <property type="entry name" value="DNA_ligase_ATP-dep_C"/>
</dbReference>
<dbReference type="InterPro" id="IPR012310">
    <property type="entry name" value="DNA_ligase_ATP-dep_cent"/>
</dbReference>
<dbReference type="InterPro" id="IPR016059">
    <property type="entry name" value="DNA_ligase_ATP-dep_CS"/>
</dbReference>
<dbReference type="InterPro" id="IPR012308">
    <property type="entry name" value="DNA_ligase_ATP-dep_N"/>
</dbReference>
<dbReference type="InterPro" id="IPR036599">
    <property type="entry name" value="DNA_ligase_N_sf"/>
</dbReference>
<dbReference type="InterPro" id="IPR012340">
    <property type="entry name" value="NA-bd_OB-fold"/>
</dbReference>
<dbReference type="NCBIfam" id="TIGR00574">
    <property type="entry name" value="dnl1"/>
    <property type="match status" value="1"/>
</dbReference>
<dbReference type="PANTHER" id="PTHR45674:SF4">
    <property type="entry name" value="DNA LIGASE 1"/>
    <property type="match status" value="1"/>
</dbReference>
<dbReference type="PANTHER" id="PTHR45674">
    <property type="entry name" value="DNA LIGASE 1/3 FAMILY MEMBER"/>
    <property type="match status" value="1"/>
</dbReference>
<dbReference type="Pfam" id="PF04679">
    <property type="entry name" value="DNA_ligase_A_C"/>
    <property type="match status" value="1"/>
</dbReference>
<dbReference type="Pfam" id="PF01068">
    <property type="entry name" value="DNA_ligase_A_M"/>
    <property type="match status" value="1"/>
</dbReference>
<dbReference type="Pfam" id="PF04675">
    <property type="entry name" value="DNA_ligase_A_N"/>
    <property type="match status" value="1"/>
</dbReference>
<dbReference type="SUPFAM" id="SSF117018">
    <property type="entry name" value="ATP-dependent DNA ligase DNA-binding domain"/>
    <property type="match status" value="1"/>
</dbReference>
<dbReference type="SUPFAM" id="SSF56091">
    <property type="entry name" value="DNA ligase/mRNA capping enzyme, catalytic domain"/>
    <property type="match status" value="1"/>
</dbReference>
<dbReference type="SUPFAM" id="SSF50249">
    <property type="entry name" value="Nucleic acid-binding proteins"/>
    <property type="match status" value="1"/>
</dbReference>
<dbReference type="PROSITE" id="PS00697">
    <property type="entry name" value="DNA_LIGASE_A1"/>
    <property type="match status" value="1"/>
</dbReference>
<dbReference type="PROSITE" id="PS00333">
    <property type="entry name" value="DNA_LIGASE_A2"/>
    <property type="match status" value="1"/>
</dbReference>
<dbReference type="PROSITE" id="PS50160">
    <property type="entry name" value="DNA_LIGASE_A3"/>
    <property type="match status" value="1"/>
</dbReference>
<accession>Q869E1</accession>
<accession>Q556E8</accession>
<reference key="1">
    <citation type="journal article" date="2002" name="Nature">
        <title>Sequence and analysis of chromosome 2 of Dictyostelium discoideum.</title>
        <authorList>
            <person name="Gloeckner G."/>
            <person name="Eichinger L."/>
            <person name="Szafranski K."/>
            <person name="Pachebat J.A."/>
            <person name="Bankier A.T."/>
            <person name="Dear P.H."/>
            <person name="Lehmann R."/>
            <person name="Baumgart C."/>
            <person name="Parra G."/>
            <person name="Abril J.F."/>
            <person name="Guigo R."/>
            <person name="Kumpf K."/>
            <person name="Tunggal B."/>
            <person name="Cox E.C."/>
            <person name="Quail M.A."/>
            <person name="Platzer M."/>
            <person name="Rosenthal A."/>
            <person name="Noegel A.A."/>
        </authorList>
    </citation>
    <scope>NUCLEOTIDE SEQUENCE [LARGE SCALE GENOMIC DNA]</scope>
    <source>
        <strain>AX4</strain>
    </source>
</reference>
<reference key="2">
    <citation type="journal article" date="2005" name="Nature">
        <title>The genome of the social amoeba Dictyostelium discoideum.</title>
        <authorList>
            <person name="Eichinger L."/>
            <person name="Pachebat J.A."/>
            <person name="Gloeckner G."/>
            <person name="Rajandream M.A."/>
            <person name="Sucgang R."/>
            <person name="Berriman M."/>
            <person name="Song J."/>
            <person name="Olsen R."/>
            <person name="Szafranski K."/>
            <person name="Xu Q."/>
            <person name="Tunggal B."/>
            <person name="Kummerfeld S."/>
            <person name="Madera M."/>
            <person name="Konfortov B.A."/>
            <person name="Rivero F."/>
            <person name="Bankier A.T."/>
            <person name="Lehmann R."/>
            <person name="Hamlin N."/>
            <person name="Davies R."/>
            <person name="Gaudet P."/>
            <person name="Fey P."/>
            <person name="Pilcher K."/>
            <person name="Chen G."/>
            <person name="Saunders D."/>
            <person name="Sodergren E.J."/>
            <person name="Davis P."/>
            <person name="Kerhornou A."/>
            <person name="Nie X."/>
            <person name="Hall N."/>
            <person name="Anjard C."/>
            <person name="Hemphill L."/>
            <person name="Bason N."/>
            <person name="Farbrother P."/>
            <person name="Desany B."/>
            <person name="Just E."/>
            <person name="Morio T."/>
            <person name="Rost R."/>
            <person name="Churcher C.M."/>
            <person name="Cooper J."/>
            <person name="Haydock S."/>
            <person name="van Driessche N."/>
            <person name="Cronin A."/>
            <person name="Goodhead I."/>
            <person name="Muzny D.M."/>
            <person name="Mourier T."/>
            <person name="Pain A."/>
            <person name="Lu M."/>
            <person name="Harper D."/>
            <person name="Lindsay R."/>
            <person name="Hauser H."/>
            <person name="James K.D."/>
            <person name="Quiles M."/>
            <person name="Madan Babu M."/>
            <person name="Saito T."/>
            <person name="Buchrieser C."/>
            <person name="Wardroper A."/>
            <person name="Felder M."/>
            <person name="Thangavelu M."/>
            <person name="Johnson D."/>
            <person name="Knights A."/>
            <person name="Loulseged H."/>
            <person name="Mungall K.L."/>
            <person name="Oliver K."/>
            <person name="Price C."/>
            <person name="Quail M.A."/>
            <person name="Urushihara H."/>
            <person name="Hernandez J."/>
            <person name="Rabbinowitsch E."/>
            <person name="Steffen D."/>
            <person name="Sanders M."/>
            <person name="Ma J."/>
            <person name="Kohara Y."/>
            <person name="Sharp S."/>
            <person name="Simmonds M.N."/>
            <person name="Spiegler S."/>
            <person name="Tivey A."/>
            <person name="Sugano S."/>
            <person name="White B."/>
            <person name="Walker D."/>
            <person name="Woodward J.R."/>
            <person name="Winckler T."/>
            <person name="Tanaka Y."/>
            <person name="Shaulsky G."/>
            <person name="Schleicher M."/>
            <person name="Weinstock G.M."/>
            <person name="Rosenthal A."/>
            <person name="Cox E.C."/>
            <person name="Chisholm R.L."/>
            <person name="Gibbs R.A."/>
            <person name="Loomis W.F."/>
            <person name="Platzer M."/>
            <person name="Kay R.R."/>
            <person name="Williams J.G."/>
            <person name="Dear P.H."/>
            <person name="Noegel A.A."/>
            <person name="Barrell B.G."/>
            <person name="Kuspa A."/>
        </authorList>
    </citation>
    <scope>NUCLEOTIDE SEQUENCE [LARGE SCALE GENOMIC DNA]</scope>
    <source>
        <strain>AX4</strain>
    </source>
</reference>
<protein>
    <recommendedName>
        <fullName>DNA ligase 1</fullName>
        <ecNumber evidence="2">6.5.1.1</ecNumber>
    </recommendedName>
    <alternativeName>
        <fullName>DNA ligase I</fullName>
    </alternativeName>
    <alternativeName>
        <fullName>Polydeoxyribonucleotide synthase [ATP] 1</fullName>
    </alternativeName>
</protein>
<gene>
    <name type="primary">lig1</name>
    <name type="ORF">DDB_G0274493</name>
</gene>
<keyword id="KW-0067">ATP-binding</keyword>
<keyword id="KW-0131">Cell cycle</keyword>
<keyword id="KW-0132">Cell division</keyword>
<keyword id="KW-0227">DNA damage</keyword>
<keyword id="KW-0233">DNA recombination</keyword>
<keyword id="KW-0234">DNA repair</keyword>
<keyword id="KW-0235">DNA replication</keyword>
<keyword id="KW-0436">Ligase</keyword>
<keyword id="KW-0460">Magnesium</keyword>
<keyword id="KW-0479">Metal-binding</keyword>
<keyword id="KW-0547">Nucleotide-binding</keyword>
<keyword id="KW-0539">Nucleus</keyword>
<keyword id="KW-1185">Reference proteome</keyword>
<comment type="function">
    <text evidence="1">DNA ligase that seals nicks in double-stranded DNA during DNA replication, DNA recombination and DNA repair.</text>
</comment>
<comment type="catalytic activity">
    <reaction evidence="2">
        <text>ATP + (deoxyribonucleotide)n-3'-hydroxyl + 5'-phospho-(deoxyribonucleotide)m = (deoxyribonucleotide)n+m + AMP + diphosphate.</text>
        <dbReference type="EC" id="6.5.1.1"/>
    </reaction>
</comment>
<comment type="cofactor">
    <cofactor evidence="1">
        <name>Mg(2+)</name>
        <dbReference type="ChEBI" id="CHEBI:18420"/>
    </cofactor>
</comment>
<comment type="subcellular location">
    <subcellularLocation>
        <location evidence="1">Nucleus</location>
    </subcellularLocation>
</comment>
<comment type="similarity">
    <text evidence="4">Belongs to the ATP-dependent DNA ligase family.</text>
</comment>
<organism>
    <name type="scientific">Dictyostelium discoideum</name>
    <name type="common">Social amoeba</name>
    <dbReference type="NCBI Taxonomy" id="44689"/>
    <lineage>
        <taxon>Eukaryota</taxon>
        <taxon>Amoebozoa</taxon>
        <taxon>Evosea</taxon>
        <taxon>Eumycetozoa</taxon>
        <taxon>Dictyostelia</taxon>
        <taxon>Dictyosteliales</taxon>
        <taxon>Dictyosteliaceae</taxon>
        <taxon>Dictyostelium</taxon>
    </lineage>
</organism>
<feature type="chain" id="PRO_0000351214" description="DNA ligase 1">
    <location>
        <begin position="1"/>
        <end position="1192"/>
    </location>
</feature>
<feature type="region of interest" description="Disordered" evidence="3">
    <location>
        <begin position="29"/>
        <end position="257"/>
    </location>
</feature>
<feature type="region of interest" description="Disordered" evidence="3">
    <location>
        <begin position="280"/>
        <end position="517"/>
    </location>
</feature>
<feature type="region of interest" description="Interaction with target DNA" evidence="1">
    <location>
        <begin position="724"/>
        <end position="733"/>
    </location>
</feature>
<feature type="region of interest" description="Interaction with target DNA" evidence="1">
    <location>
        <begin position="918"/>
        <end position="920"/>
    </location>
</feature>
<feature type="region of interest" description="Disordered" evidence="3">
    <location>
        <begin position="1157"/>
        <end position="1192"/>
    </location>
</feature>
<feature type="compositionally biased region" description="Basic and acidic residues" evidence="3">
    <location>
        <begin position="42"/>
        <end position="56"/>
    </location>
</feature>
<feature type="compositionally biased region" description="Acidic residues" evidence="3">
    <location>
        <begin position="70"/>
        <end position="113"/>
    </location>
</feature>
<feature type="compositionally biased region" description="Basic and acidic residues" evidence="3">
    <location>
        <begin position="141"/>
        <end position="155"/>
    </location>
</feature>
<feature type="compositionally biased region" description="Acidic residues" evidence="3">
    <location>
        <begin position="172"/>
        <end position="198"/>
    </location>
</feature>
<feature type="compositionally biased region" description="Basic and acidic residues" evidence="3">
    <location>
        <begin position="199"/>
        <end position="257"/>
    </location>
</feature>
<feature type="compositionally biased region" description="Basic and acidic residues" evidence="3">
    <location>
        <begin position="280"/>
        <end position="368"/>
    </location>
</feature>
<feature type="compositionally biased region" description="Low complexity" evidence="3">
    <location>
        <begin position="371"/>
        <end position="382"/>
    </location>
</feature>
<feature type="compositionally biased region" description="Low complexity" evidence="3">
    <location>
        <begin position="410"/>
        <end position="434"/>
    </location>
</feature>
<feature type="compositionally biased region" description="Basic and acidic residues" evidence="3">
    <location>
        <begin position="435"/>
        <end position="467"/>
    </location>
</feature>
<feature type="compositionally biased region" description="Acidic residues" evidence="3">
    <location>
        <begin position="468"/>
        <end position="511"/>
    </location>
</feature>
<feature type="compositionally biased region" description="Polar residues" evidence="3">
    <location>
        <begin position="1162"/>
        <end position="1184"/>
    </location>
</feature>
<feature type="active site" description="N6-AMP-lysine intermediate" evidence="2">
    <location>
        <position position="844"/>
    </location>
</feature>
<feature type="binding site" evidence="1">
    <location>
        <position position="842"/>
    </location>
    <ligand>
        <name>ATP</name>
        <dbReference type="ChEBI" id="CHEBI:30616"/>
    </ligand>
</feature>
<feature type="binding site" evidence="1">
    <location>
        <position position="849"/>
    </location>
    <ligand>
        <name>ATP</name>
        <dbReference type="ChEBI" id="CHEBI:30616"/>
    </ligand>
</feature>
<feature type="binding site" evidence="1">
    <location>
        <position position="865"/>
    </location>
    <ligand>
        <name>ATP</name>
        <dbReference type="ChEBI" id="CHEBI:30616"/>
    </ligand>
</feature>
<feature type="binding site" evidence="1">
    <location>
        <position position="897"/>
    </location>
    <ligand>
        <name>Mg(2+)</name>
        <dbReference type="ChEBI" id="CHEBI:18420"/>
        <label>1</label>
    </ligand>
</feature>
<feature type="binding site" evidence="1">
    <location>
        <position position="996"/>
    </location>
    <ligand>
        <name>Mg(2+)</name>
        <dbReference type="ChEBI" id="CHEBI:18420"/>
        <label>2</label>
    </ligand>
</feature>
<feature type="binding site" evidence="1">
    <location>
        <position position="1001"/>
    </location>
    <ligand>
        <name>ATP</name>
        <dbReference type="ChEBI" id="CHEBI:30616"/>
    </ligand>
</feature>
<feature type="binding site" evidence="1">
    <location>
        <position position="1014"/>
    </location>
    <ligand>
        <name>ATP</name>
        <dbReference type="ChEBI" id="CHEBI:30616"/>
    </ligand>
</feature>
<feature type="binding site" evidence="1">
    <location>
        <position position="1020"/>
    </location>
    <ligand>
        <name>ATP</name>
        <dbReference type="ChEBI" id="CHEBI:30616"/>
    </ligand>
</feature>
<feature type="site" description="Interaction with target DNA" evidence="1">
    <location>
        <position position="580"/>
    </location>
</feature>
<feature type="site" description="Interaction with target DNA" evidence="1">
    <location>
        <position position="866"/>
    </location>
</feature>
<feature type="site" description="Interaction with target DNA" evidence="1">
    <location>
        <position position="1046"/>
    </location>
</feature>
<feature type="site" description="Interaction with target DNA" evidence="1">
    <location>
        <position position="1071"/>
    </location>
</feature>
<name>DNLI1_DICDI</name>